<proteinExistence type="inferred from homology"/>
<reference key="1">
    <citation type="journal article" date="2010" name="Genome Biol. Evol.">
        <title>Continuing evolution of Burkholderia mallei through genome reduction and large-scale rearrangements.</title>
        <authorList>
            <person name="Losada L."/>
            <person name="Ronning C.M."/>
            <person name="DeShazer D."/>
            <person name="Woods D."/>
            <person name="Fedorova N."/>
            <person name="Kim H.S."/>
            <person name="Shabalina S.A."/>
            <person name="Pearson T.R."/>
            <person name="Brinkac L."/>
            <person name="Tan P."/>
            <person name="Nandi T."/>
            <person name="Crabtree J."/>
            <person name="Badger J."/>
            <person name="Beckstrom-Sternberg S."/>
            <person name="Saqib M."/>
            <person name="Schutzer S.E."/>
            <person name="Keim P."/>
            <person name="Nierman W.C."/>
        </authorList>
    </citation>
    <scope>NUCLEOTIDE SEQUENCE [LARGE SCALE GENOMIC DNA]</scope>
    <source>
        <strain>1106a</strain>
    </source>
</reference>
<gene>
    <name evidence="1" type="primary">hmgA</name>
    <name type="ordered locus">BURPS1106A_3213</name>
</gene>
<name>HGD_BURP0</name>
<organism>
    <name type="scientific">Burkholderia pseudomallei (strain 1106a)</name>
    <dbReference type="NCBI Taxonomy" id="357348"/>
    <lineage>
        <taxon>Bacteria</taxon>
        <taxon>Pseudomonadati</taxon>
        <taxon>Pseudomonadota</taxon>
        <taxon>Betaproteobacteria</taxon>
        <taxon>Burkholderiales</taxon>
        <taxon>Burkholderiaceae</taxon>
        <taxon>Burkholderia</taxon>
        <taxon>pseudomallei group</taxon>
    </lineage>
</organism>
<keyword id="KW-0223">Dioxygenase</keyword>
<keyword id="KW-0408">Iron</keyword>
<keyword id="KW-0479">Metal-binding</keyword>
<keyword id="KW-0560">Oxidoreductase</keyword>
<keyword id="KW-0585">Phenylalanine catabolism</keyword>
<keyword id="KW-0828">Tyrosine catabolism</keyword>
<protein>
    <recommendedName>
        <fullName evidence="1">Homogentisate 1,2-dioxygenase</fullName>
        <shortName evidence="1">HGDO</shortName>
        <ecNumber evidence="1">1.13.11.5</ecNumber>
    </recommendedName>
    <alternativeName>
        <fullName evidence="1">Homogentisate oxygenase</fullName>
    </alternativeName>
    <alternativeName>
        <fullName evidence="1">Homogentisic acid oxidase</fullName>
    </alternativeName>
    <alternativeName>
        <fullName evidence="1">Homogentisicase</fullName>
    </alternativeName>
</protein>
<sequence length="450" mass="50130">MERTTIMTLDFSKPGEAGYQSGFANEFATEALPGALPHARNSPQRAPYGLYAEQFSGTAFTAPRGHNRRSWLYRIRPAAVHRPFELVSGERRIVAEFGDSDDVPPTPPNQLRWDPLPMPAQPTDFVDGWVTMAGNGSAAAMSGCAIHLYAANRSMRERFFYSADGELLIVPQEGRLFIMTELGRLDVEPFEIAVIPRGVRFAVALPDGRARGYVCENFGALLRLPDLGPIGSNGLANPRDFLTPHASYEDREGAFELVAKLNGRLWRADIDHSPFDVVAWHGNYAPYKYDLRHFNTIGSISYDHPDPSIFLVLQSQSDTPGVDAIDFVIFPPRWLAAEDTFRPPWFHRNVASEFMGLVHGVYDAKAEGFVPGGASLHNCMSGHGPDADTFEKASSIDTSKPNKVGDTMAFMFETRTLIRPTRFALDTAQLQANYFECWQGLKKHFNPEQR</sequence>
<dbReference type="EC" id="1.13.11.5" evidence="1"/>
<dbReference type="EMBL" id="CP000572">
    <property type="protein sequence ID" value="ABN90235.1"/>
    <property type="molecule type" value="Genomic_DNA"/>
</dbReference>
<dbReference type="SMR" id="A3NYN0"/>
<dbReference type="KEGG" id="bpl:BURPS1106A_3213"/>
<dbReference type="HOGENOM" id="CLU_027174_0_0_4"/>
<dbReference type="UniPathway" id="UPA00139">
    <property type="reaction ID" value="UER00339"/>
</dbReference>
<dbReference type="Proteomes" id="UP000006738">
    <property type="component" value="Chromosome I"/>
</dbReference>
<dbReference type="GO" id="GO:0005737">
    <property type="term" value="C:cytoplasm"/>
    <property type="evidence" value="ECO:0007669"/>
    <property type="project" value="TreeGrafter"/>
</dbReference>
<dbReference type="GO" id="GO:0004411">
    <property type="term" value="F:homogentisate 1,2-dioxygenase activity"/>
    <property type="evidence" value="ECO:0007669"/>
    <property type="project" value="UniProtKB-UniRule"/>
</dbReference>
<dbReference type="GO" id="GO:0005506">
    <property type="term" value="F:iron ion binding"/>
    <property type="evidence" value="ECO:0007669"/>
    <property type="project" value="UniProtKB-UniRule"/>
</dbReference>
<dbReference type="GO" id="GO:0006559">
    <property type="term" value="P:L-phenylalanine catabolic process"/>
    <property type="evidence" value="ECO:0007669"/>
    <property type="project" value="UniProtKB-UniRule"/>
</dbReference>
<dbReference type="GO" id="GO:0006572">
    <property type="term" value="P:tyrosine catabolic process"/>
    <property type="evidence" value="ECO:0007669"/>
    <property type="project" value="UniProtKB-UniRule"/>
</dbReference>
<dbReference type="CDD" id="cd07000">
    <property type="entry name" value="cupin_HGO_N"/>
    <property type="match status" value="1"/>
</dbReference>
<dbReference type="FunFam" id="2.60.120.10:FF:000034">
    <property type="entry name" value="Homogentisate 1,2-dioxygenase"/>
    <property type="match status" value="1"/>
</dbReference>
<dbReference type="Gene3D" id="2.60.120.10">
    <property type="entry name" value="Jelly Rolls"/>
    <property type="match status" value="1"/>
</dbReference>
<dbReference type="HAMAP" id="MF_00334">
    <property type="entry name" value="Homogentis_dioxygen"/>
    <property type="match status" value="1"/>
</dbReference>
<dbReference type="InterPro" id="IPR046451">
    <property type="entry name" value="HgmA_C"/>
</dbReference>
<dbReference type="InterPro" id="IPR046452">
    <property type="entry name" value="HgmA_N"/>
</dbReference>
<dbReference type="InterPro" id="IPR005708">
    <property type="entry name" value="Homogentis_dOase"/>
</dbReference>
<dbReference type="InterPro" id="IPR022950">
    <property type="entry name" value="Homogentis_dOase_bac"/>
</dbReference>
<dbReference type="InterPro" id="IPR014710">
    <property type="entry name" value="RmlC-like_jellyroll"/>
</dbReference>
<dbReference type="InterPro" id="IPR011051">
    <property type="entry name" value="RmlC_Cupin_sf"/>
</dbReference>
<dbReference type="NCBIfam" id="TIGR01015">
    <property type="entry name" value="hmgA"/>
    <property type="match status" value="1"/>
</dbReference>
<dbReference type="PANTHER" id="PTHR11056">
    <property type="entry name" value="HOMOGENTISATE 1,2-DIOXYGENASE"/>
    <property type="match status" value="1"/>
</dbReference>
<dbReference type="PANTHER" id="PTHR11056:SF0">
    <property type="entry name" value="HOMOGENTISATE 1,2-DIOXYGENASE"/>
    <property type="match status" value="1"/>
</dbReference>
<dbReference type="Pfam" id="PF04209">
    <property type="entry name" value="HgmA_C"/>
    <property type="match status" value="1"/>
</dbReference>
<dbReference type="Pfam" id="PF20510">
    <property type="entry name" value="HgmA_N"/>
    <property type="match status" value="1"/>
</dbReference>
<dbReference type="SUPFAM" id="SSF51182">
    <property type="entry name" value="RmlC-like cupins"/>
    <property type="match status" value="1"/>
</dbReference>
<accession>A3NYN0</accession>
<feature type="chain" id="PRO_1000019527" description="Homogentisate 1,2-dioxygenase">
    <location>
        <begin position="1"/>
        <end position="450"/>
    </location>
</feature>
<feature type="active site" description="Proton acceptor" evidence="1">
    <location>
        <position position="304"/>
    </location>
</feature>
<feature type="binding site" evidence="1">
    <location>
        <position position="347"/>
    </location>
    <ligand>
        <name>Fe cation</name>
        <dbReference type="ChEBI" id="CHEBI:24875"/>
    </ligand>
</feature>
<feature type="binding site" evidence="1">
    <location>
        <position position="353"/>
    </location>
    <ligand>
        <name>Fe cation</name>
        <dbReference type="ChEBI" id="CHEBI:24875"/>
    </ligand>
</feature>
<feature type="binding site" evidence="1">
    <location>
        <position position="362"/>
    </location>
    <ligand>
        <name>homogentisate</name>
        <dbReference type="ChEBI" id="CHEBI:16169"/>
    </ligand>
</feature>
<feature type="binding site" evidence="1">
    <location>
        <position position="383"/>
    </location>
    <ligand>
        <name>Fe cation</name>
        <dbReference type="ChEBI" id="CHEBI:24875"/>
    </ligand>
</feature>
<feature type="binding site" evidence="1">
    <location>
        <position position="383"/>
    </location>
    <ligand>
        <name>homogentisate</name>
        <dbReference type="ChEBI" id="CHEBI:16169"/>
    </ligand>
</feature>
<evidence type="ECO:0000255" key="1">
    <source>
        <dbReference type="HAMAP-Rule" id="MF_00334"/>
    </source>
</evidence>
<comment type="function">
    <text evidence="1">Involved in the catabolism of homogentisate (2,5-dihydroxyphenylacetate or 2,5-OH-PhAc), a central intermediate in the degradation of phenylalanine and tyrosine. Catalyzes the oxidative ring cleavage of the aromatic ring of homogentisate to yield maleylacetoacetate.</text>
</comment>
<comment type="catalytic activity">
    <reaction evidence="1">
        <text>homogentisate + O2 = 4-maleylacetoacetate + H(+)</text>
        <dbReference type="Rhea" id="RHEA:15449"/>
        <dbReference type="ChEBI" id="CHEBI:15378"/>
        <dbReference type="ChEBI" id="CHEBI:15379"/>
        <dbReference type="ChEBI" id="CHEBI:16169"/>
        <dbReference type="ChEBI" id="CHEBI:17105"/>
        <dbReference type="EC" id="1.13.11.5"/>
    </reaction>
</comment>
<comment type="cofactor">
    <cofactor evidence="1">
        <name>Fe cation</name>
        <dbReference type="ChEBI" id="CHEBI:24875"/>
    </cofactor>
</comment>
<comment type="pathway">
    <text evidence="1">Amino-acid degradation; L-phenylalanine degradation; acetoacetate and fumarate from L-phenylalanine: step 4/6.</text>
</comment>
<comment type="subunit">
    <text evidence="1">Hexamer; dimer of trimers.</text>
</comment>
<comment type="similarity">
    <text evidence="1">Belongs to the homogentisate dioxygenase family.</text>
</comment>